<comment type="function">
    <text evidence="1">Located on the platform of the 30S subunit, it bridges several disparate RNA helices of the 16S rRNA. Forms part of the Shine-Dalgarno cleft in the 70S ribosome.</text>
</comment>
<comment type="subunit">
    <text evidence="1">Part of the 30S ribosomal subunit. Interacts with proteins S7 and S18. Binds to IF-3.</text>
</comment>
<comment type="similarity">
    <text evidence="1">Belongs to the universal ribosomal protein uS11 family.</text>
</comment>
<feature type="chain" id="PRO_1000165556" description="Small ribosomal subunit protein uS11">
    <location>
        <begin position="1"/>
        <end position="129"/>
    </location>
</feature>
<keyword id="KW-1185">Reference proteome</keyword>
<keyword id="KW-0687">Ribonucleoprotein</keyword>
<keyword id="KW-0689">Ribosomal protein</keyword>
<keyword id="KW-0694">RNA-binding</keyword>
<keyword id="KW-0699">rRNA-binding</keyword>
<name>RS11_METNO</name>
<protein>
    <recommendedName>
        <fullName evidence="1">Small ribosomal subunit protein uS11</fullName>
    </recommendedName>
    <alternativeName>
        <fullName evidence="2">30S ribosomal protein S11</fullName>
    </alternativeName>
</protein>
<dbReference type="EMBL" id="CP001349">
    <property type="protein sequence ID" value="ACL56920.1"/>
    <property type="molecule type" value="Genomic_DNA"/>
</dbReference>
<dbReference type="RefSeq" id="WP_015928609.1">
    <property type="nucleotide sequence ID" value="NC_011894.1"/>
</dbReference>
<dbReference type="SMR" id="B8IT34"/>
<dbReference type="STRING" id="460265.Mnod_1931"/>
<dbReference type="KEGG" id="mno:Mnod_1931"/>
<dbReference type="eggNOG" id="COG0100">
    <property type="taxonomic scope" value="Bacteria"/>
</dbReference>
<dbReference type="HOGENOM" id="CLU_072439_5_0_5"/>
<dbReference type="OrthoDB" id="9806415at2"/>
<dbReference type="Proteomes" id="UP000008207">
    <property type="component" value="Chromosome"/>
</dbReference>
<dbReference type="GO" id="GO:1990904">
    <property type="term" value="C:ribonucleoprotein complex"/>
    <property type="evidence" value="ECO:0007669"/>
    <property type="project" value="UniProtKB-KW"/>
</dbReference>
<dbReference type="GO" id="GO:0005840">
    <property type="term" value="C:ribosome"/>
    <property type="evidence" value="ECO:0007669"/>
    <property type="project" value="UniProtKB-KW"/>
</dbReference>
<dbReference type="GO" id="GO:0019843">
    <property type="term" value="F:rRNA binding"/>
    <property type="evidence" value="ECO:0007669"/>
    <property type="project" value="UniProtKB-UniRule"/>
</dbReference>
<dbReference type="GO" id="GO:0003735">
    <property type="term" value="F:structural constituent of ribosome"/>
    <property type="evidence" value="ECO:0007669"/>
    <property type="project" value="InterPro"/>
</dbReference>
<dbReference type="GO" id="GO:0006412">
    <property type="term" value="P:translation"/>
    <property type="evidence" value="ECO:0007669"/>
    <property type="project" value="UniProtKB-UniRule"/>
</dbReference>
<dbReference type="FunFam" id="3.30.420.80:FF:000001">
    <property type="entry name" value="30S ribosomal protein S11"/>
    <property type="match status" value="1"/>
</dbReference>
<dbReference type="Gene3D" id="3.30.420.80">
    <property type="entry name" value="Ribosomal protein S11"/>
    <property type="match status" value="1"/>
</dbReference>
<dbReference type="HAMAP" id="MF_01310">
    <property type="entry name" value="Ribosomal_uS11"/>
    <property type="match status" value="1"/>
</dbReference>
<dbReference type="InterPro" id="IPR001971">
    <property type="entry name" value="Ribosomal_uS11"/>
</dbReference>
<dbReference type="InterPro" id="IPR019981">
    <property type="entry name" value="Ribosomal_uS11_bac-type"/>
</dbReference>
<dbReference type="InterPro" id="IPR018102">
    <property type="entry name" value="Ribosomal_uS11_CS"/>
</dbReference>
<dbReference type="InterPro" id="IPR036967">
    <property type="entry name" value="Ribosomal_uS11_sf"/>
</dbReference>
<dbReference type="NCBIfam" id="NF003698">
    <property type="entry name" value="PRK05309.1"/>
    <property type="match status" value="1"/>
</dbReference>
<dbReference type="NCBIfam" id="TIGR03632">
    <property type="entry name" value="uS11_bact"/>
    <property type="match status" value="1"/>
</dbReference>
<dbReference type="PANTHER" id="PTHR11759">
    <property type="entry name" value="40S RIBOSOMAL PROTEIN S14/30S RIBOSOMAL PROTEIN S11"/>
    <property type="match status" value="1"/>
</dbReference>
<dbReference type="Pfam" id="PF00411">
    <property type="entry name" value="Ribosomal_S11"/>
    <property type="match status" value="1"/>
</dbReference>
<dbReference type="PIRSF" id="PIRSF002131">
    <property type="entry name" value="Ribosomal_S11"/>
    <property type="match status" value="1"/>
</dbReference>
<dbReference type="SUPFAM" id="SSF53137">
    <property type="entry name" value="Translational machinery components"/>
    <property type="match status" value="1"/>
</dbReference>
<dbReference type="PROSITE" id="PS00054">
    <property type="entry name" value="RIBOSOMAL_S11"/>
    <property type="match status" value="1"/>
</dbReference>
<evidence type="ECO:0000255" key="1">
    <source>
        <dbReference type="HAMAP-Rule" id="MF_01310"/>
    </source>
</evidence>
<evidence type="ECO:0000305" key="2"/>
<sequence length="129" mass="13863">MAKEATRVRRRERKNIVSGVAHVNASFNNTMITITDAQGNTISWSSAGAMGFKGSRKSTPYAAQVAAEDAGRKAAEHGMRTLEVEVSGPGSGRESALRALQAAGFTVTSIRDVTPIPHNGCRPRKRRRV</sequence>
<gene>
    <name evidence="1" type="primary">rpsK</name>
    <name type="ordered locus">Mnod_1931</name>
</gene>
<proteinExistence type="inferred from homology"/>
<organism>
    <name type="scientific">Methylobacterium nodulans (strain LMG 21967 / CNCM I-2342 / ORS 2060)</name>
    <dbReference type="NCBI Taxonomy" id="460265"/>
    <lineage>
        <taxon>Bacteria</taxon>
        <taxon>Pseudomonadati</taxon>
        <taxon>Pseudomonadota</taxon>
        <taxon>Alphaproteobacteria</taxon>
        <taxon>Hyphomicrobiales</taxon>
        <taxon>Methylobacteriaceae</taxon>
        <taxon>Methylobacterium</taxon>
    </lineage>
</organism>
<accession>B8IT34</accession>
<reference key="1">
    <citation type="submission" date="2009-01" db="EMBL/GenBank/DDBJ databases">
        <title>Complete sequence of chromosome of Methylobacterium nodulans ORS 2060.</title>
        <authorList>
            <consortium name="US DOE Joint Genome Institute"/>
            <person name="Lucas S."/>
            <person name="Copeland A."/>
            <person name="Lapidus A."/>
            <person name="Glavina del Rio T."/>
            <person name="Dalin E."/>
            <person name="Tice H."/>
            <person name="Bruce D."/>
            <person name="Goodwin L."/>
            <person name="Pitluck S."/>
            <person name="Sims D."/>
            <person name="Brettin T."/>
            <person name="Detter J.C."/>
            <person name="Han C."/>
            <person name="Larimer F."/>
            <person name="Land M."/>
            <person name="Hauser L."/>
            <person name="Kyrpides N."/>
            <person name="Ivanova N."/>
            <person name="Marx C.J."/>
            <person name="Richardson P."/>
        </authorList>
    </citation>
    <scope>NUCLEOTIDE SEQUENCE [LARGE SCALE GENOMIC DNA]</scope>
    <source>
        <strain>LMG 21967 / CNCM I-2342 / ORS 2060</strain>
    </source>
</reference>